<sequence>MAQKKASLACVECGSRNYSIGVSSTPKPTRLEVNKFCKYCKTYTLHKETR</sequence>
<organism>
    <name type="scientific">Streptococcus pyogenes serotype M6 (strain ATCC BAA-946 / MGAS10394)</name>
    <dbReference type="NCBI Taxonomy" id="286636"/>
    <lineage>
        <taxon>Bacteria</taxon>
        <taxon>Bacillati</taxon>
        <taxon>Bacillota</taxon>
        <taxon>Bacilli</taxon>
        <taxon>Lactobacillales</taxon>
        <taxon>Streptococcaceae</taxon>
        <taxon>Streptococcus</taxon>
    </lineage>
</organism>
<dbReference type="EMBL" id="CP000003">
    <property type="protein sequence ID" value="AAT87887.1"/>
    <property type="molecule type" value="Genomic_DNA"/>
</dbReference>
<dbReference type="SMR" id="Q5X9M6"/>
<dbReference type="KEGG" id="spa:M6_Spy1752"/>
<dbReference type="HOGENOM" id="CLU_190949_0_1_9"/>
<dbReference type="Proteomes" id="UP000001167">
    <property type="component" value="Chromosome"/>
</dbReference>
<dbReference type="GO" id="GO:0005737">
    <property type="term" value="C:cytoplasm"/>
    <property type="evidence" value="ECO:0007669"/>
    <property type="project" value="UniProtKB-ARBA"/>
</dbReference>
<dbReference type="GO" id="GO:1990904">
    <property type="term" value="C:ribonucleoprotein complex"/>
    <property type="evidence" value="ECO:0007669"/>
    <property type="project" value="UniProtKB-KW"/>
</dbReference>
<dbReference type="GO" id="GO:0005840">
    <property type="term" value="C:ribosome"/>
    <property type="evidence" value="ECO:0007669"/>
    <property type="project" value="UniProtKB-KW"/>
</dbReference>
<dbReference type="GO" id="GO:0003735">
    <property type="term" value="F:structural constituent of ribosome"/>
    <property type="evidence" value="ECO:0007669"/>
    <property type="project" value="InterPro"/>
</dbReference>
<dbReference type="GO" id="GO:0006412">
    <property type="term" value="P:translation"/>
    <property type="evidence" value="ECO:0007669"/>
    <property type="project" value="UniProtKB-UniRule"/>
</dbReference>
<dbReference type="Gene3D" id="2.20.28.120">
    <property type="entry name" value="Ribosomal protein L33"/>
    <property type="match status" value="1"/>
</dbReference>
<dbReference type="HAMAP" id="MF_00294">
    <property type="entry name" value="Ribosomal_bL33"/>
    <property type="match status" value="1"/>
</dbReference>
<dbReference type="InterPro" id="IPR001705">
    <property type="entry name" value="Ribosomal_bL33"/>
</dbReference>
<dbReference type="InterPro" id="IPR038584">
    <property type="entry name" value="Ribosomal_bL33_sf"/>
</dbReference>
<dbReference type="InterPro" id="IPR011332">
    <property type="entry name" value="Ribosomal_zn-bd"/>
</dbReference>
<dbReference type="NCBIfam" id="NF001764">
    <property type="entry name" value="PRK00504.1"/>
    <property type="match status" value="1"/>
</dbReference>
<dbReference type="NCBIfam" id="TIGR01023">
    <property type="entry name" value="rpmG_bact"/>
    <property type="match status" value="1"/>
</dbReference>
<dbReference type="Pfam" id="PF00471">
    <property type="entry name" value="Ribosomal_L33"/>
    <property type="match status" value="1"/>
</dbReference>
<dbReference type="SUPFAM" id="SSF57829">
    <property type="entry name" value="Zn-binding ribosomal proteins"/>
    <property type="match status" value="1"/>
</dbReference>
<keyword id="KW-0687">Ribonucleoprotein</keyword>
<keyword id="KW-0689">Ribosomal protein</keyword>
<gene>
    <name evidence="1" type="primary">rpmG2</name>
    <name type="ordered locus">M6_Spy1752</name>
</gene>
<accession>Q5X9M6</accession>
<evidence type="ECO:0000255" key="1">
    <source>
        <dbReference type="HAMAP-Rule" id="MF_00294"/>
    </source>
</evidence>
<feature type="chain" id="PRO_0000356739" description="Large ribosomal subunit protein bL33B">
    <location>
        <begin position="1"/>
        <end position="50"/>
    </location>
</feature>
<proteinExistence type="inferred from homology"/>
<protein>
    <recommendedName>
        <fullName evidence="1">Large ribosomal subunit protein bL33B</fullName>
    </recommendedName>
    <alternativeName>
        <fullName evidence="1">50S ribosomal protein L33 2</fullName>
    </alternativeName>
</protein>
<comment type="similarity">
    <text evidence="1">Belongs to the bacterial ribosomal protein bL33 family.</text>
</comment>
<name>RL332_STRP6</name>
<reference key="1">
    <citation type="journal article" date="2004" name="J. Infect. Dis.">
        <title>Progress toward characterization of the group A Streptococcus metagenome: complete genome sequence of a macrolide-resistant serotype M6 strain.</title>
        <authorList>
            <person name="Banks D.J."/>
            <person name="Porcella S.F."/>
            <person name="Barbian K.D."/>
            <person name="Beres S.B."/>
            <person name="Philips L.E."/>
            <person name="Voyich J.M."/>
            <person name="DeLeo F.R."/>
            <person name="Martin J.M."/>
            <person name="Somerville G.A."/>
            <person name="Musser J.M."/>
        </authorList>
    </citation>
    <scope>NUCLEOTIDE SEQUENCE [LARGE SCALE GENOMIC DNA]</scope>
    <source>
        <strain>ATCC BAA-946 / MGAS10394</strain>
    </source>
</reference>